<comment type="function">
    <text evidence="1">Catalyzes the anti-1,4-elimination of the C-3 phosphate and the C-6 proR hydrogen from 5-enolpyruvylshikimate-3-phosphate (EPSP) to yield chorismate, which is the branch point compound that serves as the starting substrate for the three terminal pathways of aromatic amino acid biosynthesis. This reaction introduces a second double bond into the aromatic ring system.</text>
</comment>
<comment type="catalytic activity">
    <reaction evidence="1">
        <text>5-O-(1-carboxyvinyl)-3-phosphoshikimate = chorismate + phosphate</text>
        <dbReference type="Rhea" id="RHEA:21020"/>
        <dbReference type="ChEBI" id="CHEBI:29748"/>
        <dbReference type="ChEBI" id="CHEBI:43474"/>
        <dbReference type="ChEBI" id="CHEBI:57701"/>
        <dbReference type="EC" id="4.2.3.5"/>
    </reaction>
</comment>
<comment type="cofactor">
    <cofactor evidence="1">
        <name>FMNH2</name>
        <dbReference type="ChEBI" id="CHEBI:57618"/>
    </cofactor>
    <text evidence="1">Reduced FMN (FMNH(2)).</text>
</comment>
<comment type="pathway">
    <text evidence="1">Metabolic intermediate biosynthesis; chorismate biosynthesis; chorismate from D-erythrose 4-phosphate and phosphoenolpyruvate: step 7/7.</text>
</comment>
<comment type="subunit">
    <text evidence="1">Homotetramer.</text>
</comment>
<comment type="similarity">
    <text evidence="1">Belongs to the chorismate synthase family.</text>
</comment>
<organism>
    <name type="scientific">Synechococcus sp. (strain JA-2-3B'a(2-13))</name>
    <name type="common">Cyanobacteria bacterium Yellowstone B-Prime</name>
    <dbReference type="NCBI Taxonomy" id="321332"/>
    <lineage>
        <taxon>Bacteria</taxon>
        <taxon>Bacillati</taxon>
        <taxon>Cyanobacteriota</taxon>
        <taxon>Cyanophyceae</taxon>
        <taxon>Synechococcales</taxon>
        <taxon>Synechococcaceae</taxon>
        <taxon>Synechococcus</taxon>
    </lineage>
</organism>
<proteinExistence type="inferred from homology"/>
<gene>
    <name evidence="1" type="primary">aroC</name>
    <name type="ordered locus">CYB_1511</name>
</gene>
<sequence length="378" mass="40291">MANGNSFGVLFCVTTYGESHGGAVGVVVDGCPPRLPLSEADIQAELDRRRPGQSPITTPRQEADRCQILSGVFQGFTLGTPIHILVRNQDARPQDYQEMATTFRPSHADATYQAKYGIRNWQGGGRASARETIGRVAAGAIAKKILRLAAGVEILAYVQRVKDVEAQVDPSSVTAEQVEANIVRCPDPQAAAAMIQKIEEAAREGDSLGGVVECVARRVPRGLGSPVFDKLEADLAKAVMSLPASKGFEIGSGFAGTYLTGKQHNDEFYMTPGGWRTRSNRSGGIQGGISNGEDIVLRVAFKPTATIRQPQNTVTLNGQETVLAARGRHDPCVLPRAVPMVEAMVALVLCDHLLRHHAQCGSLVLSEVPLPVAAAPQA</sequence>
<keyword id="KW-0028">Amino-acid biosynthesis</keyword>
<keyword id="KW-0057">Aromatic amino acid biosynthesis</keyword>
<keyword id="KW-0274">FAD</keyword>
<keyword id="KW-0285">Flavoprotein</keyword>
<keyword id="KW-0288">FMN</keyword>
<keyword id="KW-0456">Lyase</keyword>
<keyword id="KW-0521">NADP</keyword>
<keyword id="KW-1185">Reference proteome</keyword>
<name>AROC_SYNJB</name>
<protein>
    <recommendedName>
        <fullName evidence="1">Chorismate synthase</fullName>
        <shortName evidence="1">CS</shortName>
        <ecNumber evidence="1">4.2.3.5</ecNumber>
    </recommendedName>
    <alternativeName>
        <fullName evidence="1">5-enolpyruvylshikimate-3-phosphate phospholyase</fullName>
    </alternativeName>
</protein>
<dbReference type="EC" id="4.2.3.5" evidence="1"/>
<dbReference type="EMBL" id="CP000240">
    <property type="protein sequence ID" value="ABD02477.1"/>
    <property type="molecule type" value="Genomic_DNA"/>
</dbReference>
<dbReference type="RefSeq" id="WP_011433125.1">
    <property type="nucleotide sequence ID" value="NC_007776.1"/>
</dbReference>
<dbReference type="SMR" id="Q2JLD4"/>
<dbReference type="STRING" id="321332.CYB_1511"/>
<dbReference type="KEGG" id="cyb:CYB_1511"/>
<dbReference type="eggNOG" id="COG0082">
    <property type="taxonomic scope" value="Bacteria"/>
</dbReference>
<dbReference type="HOGENOM" id="CLU_034547_0_1_3"/>
<dbReference type="OrthoDB" id="9771806at2"/>
<dbReference type="UniPathway" id="UPA00053">
    <property type="reaction ID" value="UER00090"/>
</dbReference>
<dbReference type="Proteomes" id="UP000001938">
    <property type="component" value="Chromosome"/>
</dbReference>
<dbReference type="GO" id="GO:0005829">
    <property type="term" value="C:cytosol"/>
    <property type="evidence" value="ECO:0007669"/>
    <property type="project" value="TreeGrafter"/>
</dbReference>
<dbReference type="GO" id="GO:0004107">
    <property type="term" value="F:chorismate synthase activity"/>
    <property type="evidence" value="ECO:0007669"/>
    <property type="project" value="UniProtKB-UniRule"/>
</dbReference>
<dbReference type="GO" id="GO:0010181">
    <property type="term" value="F:FMN binding"/>
    <property type="evidence" value="ECO:0007669"/>
    <property type="project" value="TreeGrafter"/>
</dbReference>
<dbReference type="GO" id="GO:0008652">
    <property type="term" value="P:amino acid biosynthetic process"/>
    <property type="evidence" value="ECO:0007669"/>
    <property type="project" value="UniProtKB-KW"/>
</dbReference>
<dbReference type="GO" id="GO:0009073">
    <property type="term" value="P:aromatic amino acid family biosynthetic process"/>
    <property type="evidence" value="ECO:0007669"/>
    <property type="project" value="UniProtKB-KW"/>
</dbReference>
<dbReference type="GO" id="GO:0009423">
    <property type="term" value="P:chorismate biosynthetic process"/>
    <property type="evidence" value="ECO:0007669"/>
    <property type="project" value="UniProtKB-UniRule"/>
</dbReference>
<dbReference type="CDD" id="cd07304">
    <property type="entry name" value="Chorismate_synthase"/>
    <property type="match status" value="1"/>
</dbReference>
<dbReference type="FunFam" id="3.60.150.10:FF:000003">
    <property type="entry name" value="Chorismate synthase"/>
    <property type="match status" value="1"/>
</dbReference>
<dbReference type="Gene3D" id="3.60.150.10">
    <property type="entry name" value="Chorismate synthase AroC"/>
    <property type="match status" value="1"/>
</dbReference>
<dbReference type="HAMAP" id="MF_00300">
    <property type="entry name" value="Chorismate_synth"/>
    <property type="match status" value="1"/>
</dbReference>
<dbReference type="InterPro" id="IPR000453">
    <property type="entry name" value="Chorismate_synth"/>
</dbReference>
<dbReference type="InterPro" id="IPR035904">
    <property type="entry name" value="Chorismate_synth_AroC_sf"/>
</dbReference>
<dbReference type="InterPro" id="IPR020541">
    <property type="entry name" value="Chorismate_synthase_CS"/>
</dbReference>
<dbReference type="NCBIfam" id="TIGR00033">
    <property type="entry name" value="aroC"/>
    <property type="match status" value="1"/>
</dbReference>
<dbReference type="NCBIfam" id="NF003793">
    <property type="entry name" value="PRK05382.1"/>
    <property type="match status" value="1"/>
</dbReference>
<dbReference type="PANTHER" id="PTHR21085">
    <property type="entry name" value="CHORISMATE SYNTHASE"/>
    <property type="match status" value="1"/>
</dbReference>
<dbReference type="PANTHER" id="PTHR21085:SF0">
    <property type="entry name" value="CHORISMATE SYNTHASE"/>
    <property type="match status" value="1"/>
</dbReference>
<dbReference type="Pfam" id="PF01264">
    <property type="entry name" value="Chorismate_synt"/>
    <property type="match status" value="1"/>
</dbReference>
<dbReference type="PIRSF" id="PIRSF001456">
    <property type="entry name" value="Chorismate_synth"/>
    <property type="match status" value="1"/>
</dbReference>
<dbReference type="SUPFAM" id="SSF103263">
    <property type="entry name" value="Chorismate synthase, AroC"/>
    <property type="match status" value="1"/>
</dbReference>
<dbReference type="PROSITE" id="PS00787">
    <property type="entry name" value="CHORISMATE_SYNTHASE_1"/>
    <property type="match status" value="1"/>
</dbReference>
<dbReference type="PROSITE" id="PS00788">
    <property type="entry name" value="CHORISMATE_SYNTHASE_2"/>
    <property type="match status" value="1"/>
</dbReference>
<dbReference type="PROSITE" id="PS00789">
    <property type="entry name" value="CHORISMATE_SYNTHASE_3"/>
    <property type="match status" value="1"/>
</dbReference>
<evidence type="ECO:0000255" key="1">
    <source>
        <dbReference type="HAMAP-Rule" id="MF_00300"/>
    </source>
</evidence>
<evidence type="ECO:0000256" key="2">
    <source>
        <dbReference type="SAM" id="MobiDB-lite"/>
    </source>
</evidence>
<feature type="chain" id="PRO_0000256352" description="Chorismate synthase">
    <location>
        <begin position="1"/>
        <end position="378"/>
    </location>
</feature>
<feature type="region of interest" description="Disordered" evidence="2">
    <location>
        <begin position="42"/>
        <end position="61"/>
    </location>
</feature>
<feature type="binding site" evidence="1">
    <location>
        <position position="49"/>
    </location>
    <ligand>
        <name>NADP(+)</name>
        <dbReference type="ChEBI" id="CHEBI:58349"/>
    </ligand>
</feature>
<feature type="binding site" evidence="1">
    <location>
        <begin position="126"/>
        <end position="128"/>
    </location>
    <ligand>
        <name>FMN</name>
        <dbReference type="ChEBI" id="CHEBI:58210"/>
    </ligand>
</feature>
<feature type="binding site" evidence="1">
    <location>
        <position position="287"/>
    </location>
    <ligand>
        <name>FMN</name>
        <dbReference type="ChEBI" id="CHEBI:58210"/>
    </ligand>
</feature>
<feature type="binding site" evidence="1">
    <location>
        <begin position="302"/>
        <end position="306"/>
    </location>
    <ligand>
        <name>FMN</name>
        <dbReference type="ChEBI" id="CHEBI:58210"/>
    </ligand>
</feature>
<feature type="binding site" evidence="1">
    <location>
        <position position="328"/>
    </location>
    <ligand>
        <name>FMN</name>
        <dbReference type="ChEBI" id="CHEBI:58210"/>
    </ligand>
</feature>
<reference key="1">
    <citation type="journal article" date="2007" name="ISME J.">
        <title>Population level functional diversity in a microbial community revealed by comparative genomic and metagenomic analyses.</title>
        <authorList>
            <person name="Bhaya D."/>
            <person name="Grossman A.R."/>
            <person name="Steunou A.-S."/>
            <person name="Khuri N."/>
            <person name="Cohan F.M."/>
            <person name="Hamamura N."/>
            <person name="Melendrez M.C."/>
            <person name="Bateson M.M."/>
            <person name="Ward D.M."/>
            <person name="Heidelberg J.F."/>
        </authorList>
    </citation>
    <scope>NUCLEOTIDE SEQUENCE [LARGE SCALE GENOMIC DNA]</scope>
    <source>
        <strain>JA-2-3B'a(2-13)</strain>
    </source>
</reference>
<accession>Q2JLD4</accession>